<organism>
    <name type="scientific">Mus musculus</name>
    <name type="common">Mouse</name>
    <dbReference type="NCBI Taxonomy" id="10090"/>
    <lineage>
        <taxon>Eukaryota</taxon>
        <taxon>Metazoa</taxon>
        <taxon>Chordata</taxon>
        <taxon>Craniata</taxon>
        <taxon>Vertebrata</taxon>
        <taxon>Euteleostomi</taxon>
        <taxon>Mammalia</taxon>
        <taxon>Eutheria</taxon>
        <taxon>Euarchontoglires</taxon>
        <taxon>Glires</taxon>
        <taxon>Rodentia</taxon>
        <taxon>Myomorpha</taxon>
        <taxon>Muroidea</taxon>
        <taxon>Muridae</taxon>
        <taxon>Murinae</taxon>
        <taxon>Mus</taxon>
        <taxon>Mus</taxon>
    </lineage>
</organism>
<proteinExistence type="evidence at protein level"/>
<protein>
    <recommendedName>
        <fullName>von Willebrand factor A domain-containing protein 8</fullName>
    </recommendedName>
</protein>
<keyword id="KW-0025">Alternative splicing</keyword>
<keyword id="KW-0067">ATP-binding</keyword>
<keyword id="KW-0496">Mitochondrion</keyword>
<keyword id="KW-0547">Nucleotide-binding</keyword>
<keyword id="KW-1185">Reference proteome</keyword>
<keyword id="KW-0809">Transit peptide</keyword>
<gene>
    <name type="primary">Vwa8</name>
    <name type="synonym">Kiaa0564</name>
</gene>
<comment type="function">
    <text evidence="5">Exhibits ATPase activity in vitro.</text>
</comment>
<comment type="subunit">
    <text evidence="1">Monomer (By similarity). Interacts with PEX7. Interacts with PEX5 in a PEX7-dependent manner (By similarity).</text>
</comment>
<comment type="subcellular location">
    <subcellularLocation>
        <location evidence="5">Mitochondrion</location>
    </subcellularLocation>
</comment>
<comment type="alternative products">
    <event type="alternative splicing"/>
    <isoform>
        <id>Q8CC88-1</id>
        <name>1</name>
        <name evidence="8">VWA8a</name>
        <sequence type="displayed"/>
    </isoform>
    <isoform>
        <id>Q8CC88-2</id>
        <name>2</name>
        <name evidence="8">VWA8b</name>
        <sequence type="described" ref="VSP_034708"/>
    </isoform>
    <isoform>
        <id>Q8CC88-3</id>
        <name>3</name>
        <sequence type="described" ref="VSP_034707"/>
    </isoform>
</comment>
<comment type="tissue specificity">
    <text evidence="5">Isoform 1 is predominantly expressed in liver, kidney, pancreas, heart, and skeletal muscle (at protein level).</text>
</comment>
<comment type="induction">
    <text evidence="5">Up-regulated by high fat diet (at protein level).</text>
</comment>
<evidence type="ECO:0000250" key="1">
    <source>
        <dbReference type="UniProtKB" id="A3KMH1"/>
    </source>
</evidence>
<evidence type="ECO:0000255" key="2"/>
<evidence type="ECO:0000255" key="3">
    <source>
        <dbReference type="PROSITE-ProRule" id="PRU00219"/>
    </source>
</evidence>
<evidence type="ECO:0000256" key="4">
    <source>
        <dbReference type="SAM" id="MobiDB-lite"/>
    </source>
</evidence>
<evidence type="ECO:0000269" key="5">
    <source>
    </source>
</evidence>
<evidence type="ECO:0000303" key="6">
    <source>
    </source>
</evidence>
<evidence type="ECO:0000303" key="7">
    <source>
    </source>
</evidence>
<evidence type="ECO:0000303" key="8">
    <source>
    </source>
</evidence>
<evidence type="ECO:0000305" key="9"/>
<sequence>MQSRLLLLGAPGGLGDVASRRVRLLLRQVLRGRPGGDQQRLEVRLLHSGATDSGETVSIGDVSYKLKTPKNPELVPQNYISDSPAQSIVQHLRWLMQKDLLGQDVFLIGPPGPLRRSVAMQYLELTKREVEYIALSRDTTETDLKQRREIRAGTAFYIDQCAVRAATEGRTLVLEGLEKAERNVLPVLNNLLENREMQLEDGRFLMSAERYDKLLQDHTKEELDAWKIVRVSENFRVIALGLPVPRYSGNPLDPPLRSRFQARDIYFLPFQDQLKLLYSVGANVSAEKISQLLSFATTLCSQESSTLGLPDFPLDSLPEAVQILDSFPMMSIEHALQWVYPYTLLLGHEGKMAVEGVLKRFELQGSGHSLLPKEIVRVERMTDSHGSYAHVTIRVAGKEVTIKVPAGTRAVNQPCAPDHFIQTVSHKQLLAEMVQSHMVKDICLIGGKGCGKTVIAKNFAALLGYSIEPIMLYQDMTARDLLQQRYTLPNGDTAWRSSPLVSAAREGKLVLLDGIHRVNAGTLAVLQRLIHDRELSLYDGSRLLREDRYLSLKEKLQLTDEQLQNRSIFPIHPSFRIIALAEPPIVGSTTQQWLGPEFLTMFFFHHMKPLVKSEEIQVIKETVPNVPQEALEKLLSVTHKLRETQDPTAQSLAASLSTRQLLRISRRLSKYPSENLHDAITKACLSRFLPSLAQSALEKNLADAAIETNTEDSLEPELENYKCEVVAGSLKIGAVSVPVHNAHEKMKVPDVLFYDNVQHMVVMEDMLKDFVLGEHLLLVGNQGVGKNKIVDRFLHLLNRPREYIQLHRDTTVQSLTLQPTVKGGLIVYEDSPLVKAVKLGHILVVDEADKAPTNVTCILKTLVENGEMILADGRRIVADAANVDGRENLVAIHPDFRMLALANRPGFPFLGNDFFGTLGDIFSCHAIDNPKPHSELSMLKQYGPDVPEPVLQKLVAAFGELRNLADQGIINYPYSTREVVNIVKHLQKFPTEGLSSVVRNVFDFDSYNNDMREILMNTLHKYGIPIGAKPTNVQLAKEFPLPEKTFMGYWIVGQTGNGMQKVLCPAETNHVDIKGPVLVNMEKYPIEKHEARFLSFTEECTSWKFPLDEVNLICDIAVSHENGEQTLYVAACNPVSLYFMNMTGKNGFFVDFFDIFPRMASGSWRPFVTVAPLGSPLRGQVVLHEEQSNAVLLLDTTGSAIRRLVLPTEEFTSKKSSWWSKEEGETYRMCKEFSHKNWVVFYKQTGNSLTVLDVLEGLAHTISLPINLRTVFLVAEDKWLLVENETNQKYLLTKPAHIGSEDTGACQLYMLKEELPSTGFGVTQETEFCIPDKVSSDQLSSENLTSAVGQKIASPNRILSDENSHATIVVGFPDLMSPSEVYSWKRSSSLRQPSVTSMTMYTGKRTNATPRHNNCVTLTHTNQVVRILPPGEVPLKDLYPKDVTPPQTAGYIEVTDLQAKKLRYIPVPSAESLSPYTAWISAISDTDALLAEWDKSSVVTVDMGGRVRLWETGLERLQQSLMEWRNMIGQDSDKHVQITIERDSNEDVSDPKHGKEDPDNMPHVGGNTWAGGTGGRDTAGLGGKGGPYRLDAGHPVYQVSEVEKDAVPEDVKRAAREMAQKAFQQRLKEIQMSEYDAATYERFSSAVQRQVHALRIILDNLQAKGKERQWLRHQATGELDDAKIIDGLAGEKSIYKRRGDLEPQLGSPQQKPKRLRLVVDVSGSMYRFNGVDRRLERSMEAVCMVMEAFENYEEKFKYDIAGHSGDGYNIKLVPVNQIPKNNKQRLEILKTMHEHSQFCMSGDHTLEGTEHAIKDITTEEADEYFVIILSDANLSRYGINPARFAQILTSDPQVNAFAIFIGSLGDQAARLQRTLPAGRSFIAMDTKKIPQILQQIFTSTMLSSI</sequence>
<accession>Q8CC88</accession>
<accession>Q3U4P9</accession>
<accession>Q6ZQ94</accession>
<accession>Q8CDH8</accession>
<accession>Q8VCU3</accession>
<reference key="1">
    <citation type="journal article" date="2005" name="Science">
        <title>The transcriptional landscape of the mammalian genome.</title>
        <authorList>
            <person name="Carninci P."/>
            <person name="Kasukawa T."/>
            <person name="Katayama S."/>
            <person name="Gough J."/>
            <person name="Frith M.C."/>
            <person name="Maeda N."/>
            <person name="Oyama R."/>
            <person name="Ravasi T."/>
            <person name="Lenhard B."/>
            <person name="Wells C."/>
            <person name="Kodzius R."/>
            <person name="Shimokawa K."/>
            <person name="Bajic V.B."/>
            <person name="Brenner S.E."/>
            <person name="Batalov S."/>
            <person name="Forrest A.R."/>
            <person name="Zavolan M."/>
            <person name="Davis M.J."/>
            <person name="Wilming L.G."/>
            <person name="Aidinis V."/>
            <person name="Allen J.E."/>
            <person name="Ambesi-Impiombato A."/>
            <person name="Apweiler R."/>
            <person name="Aturaliya R.N."/>
            <person name="Bailey T.L."/>
            <person name="Bansal M."/>
            <person name="Baxter L."/>
            <person name="Beisel K.W."/>
            <person name="Bersano T."/>
            <person name="Bono H."/>
            <person name="Chalk A.M."/>
            <person name="Chiu K.P."/>
            <person name="Choudhary V."/>
            <person name="Christoffels A."/>
            <person name="Clutterbuck D.R."/>
            <person name="Crowe M.L."/>
            <person name="Dalla E."/>
            <person name="Dalrymple B.P."/>
            <person name="de Bono B."/>
            <person name="Della Gatta G."/>
            <person name="di Bernardo D."/>
            <person name="Down T."/>
            <person name="Engstrom P."/>
            <person name="Fagiolini M."/>
            <person name="Faulkner G."/>
            <person name="Fletcher C.F."/>
            <person name="Fukushima T."/>
            <person name="Furuno M."/>
            <person name="Futaki S."/>
            <person name="Gariboldi M."/>
            <person name="Georgii-Hemming P."/>
            <person name="Gingeras T.R."/>
            <person name="Gojobori T."/>
            <person name="Green R.E."/>
            <person name="Gustincich S."/>
            <person name="Harbers M."/>
            <person name="Hayashi Y."/>
            <person name="Hensch T.K."/>
            <person name="Hirokawa N."/>
            <person name="Hill D."/>
            <person name="Huminiecki L."/>
            <person name="Iacono M."/>
            <person name="Ikeo K."/>
            <person name="Iwama A."/>
            <person name="Ishikawa T."/>
            <person name="Jakt M."/>
            <person name="Kanapin A."/>
            <person name="Katoh M."/>
            <person name="Kawasawa Y."/>
            <person name="Kelso J."/>
            <person name="Kitamura H."/>
            <person name="Kitano H."/>
            <person name="Kollias G."/>
            <person name="Krishnan S.P."/>
            <person name="Kruger A."/>
            <person name="Kummerfeld S.K."/>
            <person name="Kurochkin I.V."/>
            <person name="Lareau L.F."/>
            <person name="Lazarevic D."/>
            <person name="Lipovich L."/>
            <person name="Liu J."/>
            <person name="Liuni S."/>
            <person name="McWilliam S."/>
            <person name="Madan Babu M."/>
            <person name="Madera M."/>
            <person name="Marchionni L."/>
            <person name="Matsuda H."/>
            <person name="Matsuzawa S."/>
            <person name="Miki H."/>
            <person name="Mignone F."/>
            <person name="Miyake S."/>
            <person name="Morris K."/>
            <person name="Mottagui-Tabar S."/>
            <person name="Mulder N."/>
            <person name="Nakano N."/>
            <person name="Nakauchi H."/>
            <person name="Ng P."/>
            <person name="Nilsson R."/>
            <person name="Nishiguchi S."/>
            <person name="Nishikawa S."/>
            <person name="Nori F."/>
            <person name="Ohara O."/>
            <person name="Okazaki Y."/>
            <person name="Orlando V."/>
            <person name="Pang K.C."/>
            <person name="Pavan W.J."/>
            <person name="Pavesi G."/>
            <person name="Pesole G."/>
            <person name="Petrovsky N."/>
            <person name="Piazza S."/>
            <person name="Reed J."/>
            <person name="Reid J.F."/>
            <person name="Ring B.Z."/>
            <person name="Ringwald M."/>
            <person name="Rost B."/>
            <person name="Ruan Y."/>
            <person name="Salzberg S.L."/>
            <person name="Sandelin A."/>
            <person name="Schneider C."/>
            <person name="Schoenbach C."/>
            <person name="Sekiguchi K."/>
            <person name="Semple C.A."/>
            <person name="Seno S."/>
            <person name="Sessa L."/>
            <person name="Sheng Y."/>
            <person name="Shibata Y."/>
            <person name="Shimada H."/>
            <person name="Shimada K."/>
            <person name="Silva D."/>
            <person name="Sinclair B."/>
            <person name="Sperling S."/>
            <person name="Stupka E."/>
            <person name="Sugiura K."/>
            <person name="Sultana R."/>
            <person name="Takenaka Y."/>
            <person name="Taki K."/>
            <person name="Tammoja K."/>
            <person name="Tan S.L."/>
            <person name="Tang S."/>
            <person name="Taylor M.S."/>
            <person name="Tegner J."/>
            <person name="Teichmann S.A."/>
            <person name="Ueda H.R."/>
            <person name="van Nimwegen E."/>
            <person name="Verardo R."/>
            <person name="Wei C.L."/>
            <person name="Yagi K."/>
            <person name="Yamanishi H."/>
            <person name="Zabarovsky E."/>
            <person name="Zhu S."/>
            <person name="Zimmer A."/>
            <person name="Hide W."/>
            <person name="Bult C."/>
            <person name="Grimmond S.M."/>
            <person name="Teasdale R.D."/>
            <person name="Liu E.T."/>
            <person name="Brusic V."/>
            <person name="Quackenbush J."/>
            <person name="Wahlestedt C."/>
            <person name="Mattick J.S."/>
            <person name="Hume D.A."/>
            <person name="Kai C."/>
            <person name="Sasaki D."/>
            <person name="Tomaru Y."/>
            <person name="Fukuda S."/>
            <person name="Kanamori-Katayama M."/>
            <person name="Suzuki M."/>
            <person name="Aoki J."/>
            <person name="Arakawa T."/>
            <person name="Iida J."/>
            <person name="Imamura K."/>
            <person name="Itoh M."/>
            <person name="Kato T."/>
            <person name="Kawaji H."/>
            <person name="Kawagashira N."/>
            <person name="Kawashima T."/>
            <person name="Kojima M."/>
            <person name="Kondo S."/>
            <person name="Konno H."/>
            <person name="Nakano K."/>
            <person name="Ninomiya N."/>
            <person name="Nishio T."/>
            <person name="Okada M."/>
            <person name="Plessy C."/>
            <person name="Shibata K."/>
            <person name="Shiraki T."/>
            <person name="Suzuki S."/>
            <person name="Tagami M."/>
            <person name="Waki K."/>
            <person name="Watahiki A."/>
            <person name="Okamura-Oho Y."/>
            <person name="Suzuki H."/>
            <person name="Kawai J."/>
            <person name="Hayashizaki Y."/>
        </authorList>
    </citation>
    <scope>NUCLEOTIDE SEQUENCE [LARGE SCALE MRNA] (ISOFORMS 2 AND 3)</scope>
    <source>
        <strain>C57BL/6J</strain>
        <strain>NOD</strain>
        <tissue>Cecum</tissue>
        <tissue>Testis</tissue>
    </source>
</reference>
<reference key="2">
    <citation type="journal article" date="2009" name="PLoS Biol.">
        <title>Lineage-specific biology revealed by a finished genome assembly of the mouse.</title>
        <authorList>
            <person name="Church D.M."/>
            <person name="Goodstadt L."/>
            <person name="Hillier L.W."/>
            <person name="Zody M.C."/>
            <person name="Goldstein S."/>
            <person name="She X."/>
            <person name="Bult C.J."/>
            <person name="Agarwala R."/>
            <person name="Cherry J.L."/>
            <person name="DiCuccio M."/>
            <person name="Hlavina W."/>
            <person name="Kapustin Y."/>
            <person name="Meric P."/>
            <person name="Maglott D."/>
            <person name="Birtle Z."/>
            <person name="Marques A.C."/>
            <person name="Graves T."/>
            <person name="Zhou S."/>
            <person name="Teague B."/>
            <person name="Potamousis K."/>
            <person name="Churas C."/>
            <person name="Place M."/>
            <person name="Herschleb J."/>
            <person name="Runnheim R."/>
            <person name="Forrest D."/>
            <person name="Amos-Landgraf J."/>
            <person name="Schwartz D.C."/>
            <person name="Cheng Z."/>
            <person name="Lindblad-Toh K."/>
            <person name="Eichler E.E."/>
            <person name="Ponting C.P."/>
        </authorList>
    </citation>
    <scope>NUCLEOTIDE SEQUENCE [LARGE SCALE GENOMIC DNA]</scope>
    <source>
        <strain>C57BL/6J</strain>
    </source>
</reference>
<reference key="3">
    <citation type="journal article" date="2004" name="Genome Res.">
        <title>The status, quality, and expansion of the NIH full-length cDNA project: the Mammalian Gene Collection (MGC).</title>
        <authorList>
            <consortium name="The MGC Project Team"/>
        </authorList>
    </citation>
    <scope>NUCLEOTIDE SEQUENCE [LARGE SCALE MRNA] (ISOFORM 2)</scope>
    <source>
        <strain>FVB/N</strain>
        <tissue>Kidney</tissue>
    </source>
</reference>
<reference key="4">
    <citation type="journal article" date="2003" name="DNA Res.">
        <title>Prediction of the coding sequences of mouse homologues of KIAA gene: III. The complete nucleotide sequences of 500 mouse KIAA-homologous cDNAs identified by screening of terminal sequences of cDNA clones randomly sampled from size-fractionated libraries.</title>
        <authorList>
            <person name="Okazaki N."/>
            <person name="Kikuno R."/>
            <person name="Ohara R."/>
            <person name="Inamoto S."/>
            <person name="Koseki H."/>
            <person name="Hiraoka S."/>
            <person name="Saga Y."/>
            <person name="Nagase T."/>
            <person name="Ohara O."/>
            <person name="Koga H."/>
        </authorList>
    </citation>
    <scope>NUCLEOTIDE SEQUENCE [LARGE SCALE MRNA] OF 660-1905</scope>
    <source>
        <tissue>Embryonic tail</tissue>
    </source>
</reference>
<reference key="5">
    <citation type="journal article" date="2010" name="Cell">
        <title>A tissue-specific atlas of mouse protein phosphorylation and expression.</title>
        <authorList>
            <person name="Huttlin E.L."/>
            <person name="Jedrychowski M.P."/>
            <person name="Elias J.E."/>
            <person name="Goswami T."/>
            <person name="Rad R."/>
            <person name="Beausoleil S.A."/>
            <person name="Villen J."/>
            <person name="Haas W."/>
            <person name="Sowa M.E."/>
            <person name="Gygi S.P."/>
        </authorList>
    </citation>
    <scope>IDENTIFICATION BY MASS SPECTROMETRY [LARGE SCALE ANALYSIS]</scope>
    <source>
        <tissue>Brain</tissue>
        <tissue>Brown adipose tissue</tissue>
        <tissue>Heart</tissue>
        <tissue>Kidney</tissue>
        <tissue>Liver</tissue>
        <tissue>Lung</tissue>
        <tissue>Pancreas</tissue>
        <tissue>Spleen</tissue>
        <tissue>Testis</tissue>
    </source>
</reference>
<reference key="6">
    <citation type="journal article" date="2017" name="Biochem. Biophys. Res. Commun.">
        <title>Characterization of the novel protein KIAA0564 (Von Willebrand domain-containing protein 8).</title>
        <authorList>
            <person name="Luo M."/>
            <person name="Mengos A.E."/>
            <person name="Ma W."/>
            <person name="Finlayson J."/>
            <person name="Bustos R.Z."/>
            <person name="Xiao Zhu Y."/>
            <person name="Shi C.X."/>
            <person name="Stubblefield T.M."/>
            <person name="Willis W.T."/>
            <person name="Mandarino L.J."/>
        </authorList>
    </citation>
    <scope>FUNCTION</scope>
    <scope>TISSUE SPECIFICITY (ISOFORM 1)</scope>
    <scope>INDUCTION BY HIGH FAT DIET</scope>
    <scope>MUTAGENESIS OF 446-GLY--THR-453 AND 509-LEU--GLY-514</scope>
</reference>
<feature type="transit peptide" description="Mitochondrion" evidence="2">
    <location>
        <begin position="1"/>
        <end position="45"/>
    </location>
</feature>
<feature type="chain" id="PRO_0000343892" description="von Willebrand factor A domain-containing protein 8" evidence="2">
    <location>
        <begin position="46"/>
        <end position="1905"/>
    </location>
</feature>
<feature type="domain" description="VWFA" evidence="3">
    <location>
        <begin position="1714"/>
        <end position="1896"/>
    </location>
</feature>
<feature type="region of interest" description="Interaction with PEX7" evidence="1">
    <location>
        <begin position="1"/>
        <end position="260"/>
    </location>
</feature>
<feature type="region of interest" description="Disordered" evidence="4">
    <location>
        <begin position="1541"/>
        <end position="1583"/>
    </location>
</feature>
<feature type="compositionally biased region" description="Basic and acidic residues" evidence="4">
    <location>
        <begin position="1541"/>
        <end position="1560"/>
    </location>
</feature>
<feature type="compositionally biased region" description="Gly residues" evidence="4">
    <location>
        <begin position="1568"/>
        <end position="1583"/>
    </location>
</feature>
<feature type="binding site" evidence="2">
    <location>
        <begin position="446"/>
        <end position="453"/>
    </location>
    <ligand>
        <name>ATP</name>
        <dbReference type="ChEBI" id="CHEBI:30616"/>
    </ligand>
</feature>
<feature type="splice variant" id="VSP_034707" description="In isoform 3." evidence="7">
    <location>
        <begin position="1"/>
        <end position="1560"/>
    </location>
</feature>
<feature type="splice variant" id="VSP_034708" description="In isoform 2." evidence="6 7">
    <location>
        <begin position="1039"/>
        <end position="1905"/>
    </location>
</feature>
<feature type="mutagenesis site" description="Loss of in vitro ATPase activity." evidence="5">
    <location>
        <begin position="446"/>
        <end position="453"/>
    </location>
</feature>
<feature type="mutagenesis site" description="Loss of in vitro ATPase activity." evidence="5">
    <location>
        <begin position="509"/>
        <end position="514"/>
    </location>
</feature>
<feature type="sequence conflict" description="In Ref. 1; BAE32382." evidence="9" ref="1">
    <original>S</original>
    <variation>P</variation>
    <location>
        <position position="294"/>
    </location>
</feature>
<feature type="sequence conflict" description="In Ref. 3; AAH19143." evidence="9" ref="3">
    <original>K</original>
    <variation>R</variation>
    <location>
        <position position="555"/>
    </location>
</feature>
<feature type="sequence conflict" description="In Ref. 3; AAH19143." evidence="9" ref="3">
    <original>E</original>
    <variation>K</variation>
    <location>
        <position position="724"/>
    </location>
</feature>
<feature type="sequence conflict" description="In Ref. 3; AAH19143." evidence="9" ref="3">
    <original>V</original>
    <variation>I</variation>
    <location>
        <position position="890"/>
    </location>
</feature>
<feature type="sequence conflict" description="In Ref. 1; BAE32382." evidence="9" ref="1">
    <original>I</original>
    <variation>V</variation>
    <location>
        <position position="1014"/>
    </location>
</feature>
<name>VWA8_MOUSE</name>
<dbReference type="EMBL" id="AK030028">
    <property type="protein sequence ID" value="BAC26746.1"/>
    <property type="molecule type" value="mRNA"/>
</dbReference>
<dbReference type="EMBL" id="AK033642">
    <property type="protein sequence ID" value="BAC28404.1"/>
    <property type="molecule type" value="mRNA"/>
</dbReference>
<dbReference type="EMBL" id="AK154108">
    <property type="protein sequence ID" value="BAE32382.1"/>
    <property type="molecule type" value="mRNA"/>
</dbReference>
<dbReference type="EMBL" id="AC155167">
    <property type="status" value="NOT_ANNOTATED_CDS"/>
    <property type="molecule type" value="Genomic_DNA"/>
</dbReference>
<dbReference type="EMBL" id="AC124709">
    <property type="status" value="NOT_ANNOTATED_CDS"/>
    <property type="molecule type" value="Genomic_DNA"/>
</dbReference>
<dbReference type="EMBL" id="AC139758">
    <property type="status" value="NOT_ANNOTATED_CDS"/>
    <property type="molecule type" value="Genomic_DNA"/>
</dbReference>
<dbReference type="EMBL" id="BC019143">
    <property type="protein sequence ID" value="AAH19143.1"/>
    <property type="molecule type" value="mRNA"/>
</dbReference>
<dbReference type="EMBL" id="AK129164">
    <property type="protein sequence ID" value="BAC97974.1"/>
    <property type="molecule type" value="mRNA"/>
</dbReference>
<dbReference type="CCDS" id="CCDS49550.1">
    <molecule id="Q8CC88-1"/>
</dbReference>
<dbReference type="CCDS" id="CCDS88721.1">
    <molecule id="Q8CC88-2"/>
</dbReference>
<dbReference type="RefSeq" id="NP_082182.1">
    <molecule id="Q8CC88-1"/>
    <property type="nucleotide sequence ID" value="NM_027906.1"/>
</dbReference>
<dbReference type="RefSeq" id="NP_776119.2">
    <molecule id="Q8CC88-2"/>
    <property type="nucleotide sequence ID" value="NM_173758.3"/>
</dbReference>
<dbReference type="BioGRID" id="230127">
    <property type="interactions" value="11"/>
</dbReference>
<dbReference type="FunCoup" id="Q8CC88">
    <property type="interactions" value="2804"/>
</dbReference>
<dbReference type="IntAct" id="Q8CC88">
    <property type="interactions" value="6"/>
</dbReference>
<dbReference type="MINT" id="Q8CC88"/>
<dbReference type="STRING" id="10090.ENSMUSP00000048925"/>
<dbReference type="GlyGen" id="Q8CC88">
    <property type="glycosylation" value="4 sites, 2 N-linked glycans (2 sites), 1 O-linked glycan (1 site)"/>
</dbReference>
<dbReference type="iPTMnet" id="Q8CC88"/>
<dbReference type="PhosphoSitePlus" id="Q8CC88"/>
<dbReference type="SwissPalm" id="Q8CC88"/>
<dbReference type="jPOST" id="Q8CC88"/>
<dbReference type="PaxDb" id="10090-ENSMUSP00000048925"/>
<dbReference type="PeptideAtlas" id="Q8CC88"/>
<dbReference type="ProteomicsDB" id="297833">
    <molecule id="Q8CC88-1"/>
</dbReference>
<dbReference type="ProteomicsDB" id="297834">
    <molecule id="Q8CC88-2"/>
</dbReference>
<dbReference type="ProteomicsDB" id="297835">
    <molecule id="Q8CC88-3"/>
</dbReference>
<dbReference type="Pumba" id="Q8CC88"/>
<dbReference type="Antibodypedia" id="23432">
    <property type="antibodies" value="14 antibodies from 8 providers"/>
</dbReference>
<dbReference type="Ensembl" id="ENSMUST00000040990.7">
    <molecule id="Q8CC88-1"/>
    <property type="protein sequence ID" value="ENSMUSP00000048925.6"/>
    <property type="gene ID" value="ENSMUSG00000058997.9"/>
</dbReference>
<dbReference type="Ensembl" id="ENSMUST00000227255.2">
    <molecule id="Q8CC88-2"/>
    <property type="protein sequence ID" value="ENSMUSP00000154270.2"/>
    <property type="gene ID" value="ENSMUSG00000058997.9"/>
</dbReference>
<dbReference type="GeneID" id="219189"/>
<dbReference type="KEGG" id="mmu:219189"/>
<dbReference type="UCSC" id="uc007usp.2">
    <molecule id="Q8CC88-1"/>
    <property type="organism name" value="mouse"/>
</dbReference>
<dbReference type="AGR" id="MGI:1919008"/>
<dbReference type="CTD" id="23078"/>
<dbReference type="MGI" id="MGI:1919008">
    <property type="gene designation" value="Vwa8"/>
</dbReference>
<dbReference type="VEuPathDB" id="HostDB:ENSMUSG00000058997"/>
<dbReference type="eggNOG" id="KOG1808">
    <property type="taxonomic scope" value="Eukaryota"/>
</dbReference>
<dbReference type="GeneTree" id="ENSGT00390000006601"/>
<dbReference type="HOGENOM" id="CLU_001400_0_0_1"/>
<dbReference type="InParanoid" id="Q8CC88"/>
<dbReference type="OMA" id="GTHIVHP"/>
<dbReference type="OrthoDB" id="5186at2759"/>
<dbReference type="PhylomeDB" id="Q8CC88"/>
<dbReference type="TreeFam" id="TF300317"/>
<dbReference type="BioGRID-ORCS" id="219189">
    <property type="hits" value="0 hits in 76 CRISPR screens"/>
</dbReference>
<dbReference type="ChiTaRS" id="Vwa8">
    <property type="organism name" value="mouse"/>
</dbReference>
<dbReference type="PRO" id="PR:Q8CC88"/>
<dbReference type="Proteomes" id="UP000000589">
    <property type="component" value="Chromosome 14"/>
</dbReference>
<dbReference type="RNAct" id="Q8CC88">
    <property type="molecule type" value="protein"/>
</dbReference>
<dbReference type="Bgee" id="ENSMUSG00000058997">
    <property type="expression patterns" value="Expressed in right kidney and 234 other cell types or tissues"/>
</dbReference>
<dbReference type="GO" id="GO:0005739">
    <property type="term" value="C:mitochondrion"/>
    <property type="evidence" value="ECO:0000314"/>
    <property type="project" value="UniProtKB"/>
</dbReference>
<dbReference type="GO" id="GO:0005524">
    <property type="term" value="F:ATP binding"/>
    <property type="evidence" value="ECO:0007669"/>
    <property type="project" value="UniProtKB-KW"/>
</dbReference>
<dbReference type="GO" id="GO:0016887">
    <property type="term" value="F:ATP hydrolysis activity"/>
    <property type="evidence" value="ECO:0000314"/>
    <property type="project" value="UniProtKB"/>
</dbReference>
<dbReference type="CDD" id="cd00009">
    <property type="entry name" value="AAA"/>
    <property type="match status" value="1"/>
</dbReference>
<dbReference type="FunFam" id="3.40.50.300:FF:000587">
    <property type="entry name" value="von Willebrand factor A domain containing 8"/>
    <property type="match status" value="1"/>
</dbReference>
<dbReference type="FunFam" id="3.40.50.300:FF:000663">
    <property type="entry name" value="von Willebrand factor A domain containing 8"/>
    <property type="match status" value="1"/>
</dbReference>
<dbReference type="FunFam" id="3.40.50.300:FF:000989">
    <property type="entry name" value="von Willebrand factor A domain containing 8"/>
    <property type="match status" value="1"/>
</dbReference>
<dbReference type="Gene3D" id="3.40.50.300">
    <property type="entry name" value="P-loop containing nucleotide triphosphate hydrolases"/>
    <property type="match status" value="3"/>
</dbReference>
<dbReference type="Gene3D" id="3.40.50.410">
    <property type="entry name" value="von Willebrand factor, type A domain"/>
    <property type="match status" value="1"/>
</dbReference>
<dbReference type="InterPro" id="IPR003593">
    <property type="entry name" value="AAA+_ATPase"/>
</dbReference>
<dbReference type="InterPro" id="IPR011704">
    <property type="entry name" value="ATPase_dyneun-rel_AAA"/>
</dbReference>
<dbReference type="InterPro" id="IPR027417">
    <property type="entry name" value="P-loop_NTPase"/>
</dbReference>
<dbReference type="InterPro" id="IPR039891">
    <property type="entry name" value="VWA8"/>
</dbReference>
<dbReference type="InterPro" id="IPR002035">
    <property type="entry name" value="VWF_A"/>
</dbReference>
<dbReference type="InterPro" id="IPR036465">
    <property type="entry name" value="vWFA_dom_sf"/>
</dbReference>
<dbReference type="PANTHER" id="PTHR21610">
    <property type="entry name" value="VON WILLEBRAND FACTOR A DOMAIN-CONTAINING PROTEIN 8"/>
    <property type="match status" value="1"/>
</dbReference>
<dbReference type="PANTHER" id="PTHR21610:SF9">
    <property type="entry name" value="VON WILLEBRAND FACTOR A DOMAIN-CONTAINING PROTEIN 8"/>
    <property type="match status" value="1"/>
</dbReference>
<dbReference type="Pfam" id="PF07728">
    <property type="entry name" value="AAA_5"/>
    <property type="match status" value="3"/>
</dbReference>
<dbReference type="SMART" id="SM00382">
    <property type="entry name" value="AAA"/>
    <property type="match status" value="2"/>
</dbReference>
<dbReference type="SMART" id="SM00327">
    <property type="entry name" value="VWA"/>
    <property type="match status" value="1"/>
</dbReference>
<dbReference type="SUPFAM" id="SSF52540">
    <property type="entry name" value="P-loop containing nucleoside triphosphate hydrolases"/>
    <property type="match status" value="3"/>
</dbReference>
<dbReference type="SUPFAM" id="SSF53300">
    <property type="entry name" value="vWA-like"/>
    <property type="match status" value="1"/>
</dbReference>
<dbReference type="PROSITE" id="PS50234">
    <property type="entry name" value="VWFA"/>
    <property type="match status" value="1"/>
</dbReference>